<keyword id="KW-0963">Cytoplasm</keyword>
<keyword id="KW-0488">Methylation</keyword>
<keyword id="KW-0648">Protein biosynthesis</keyword>
<dbReference type="EMBL" id="AM920689">
    <property type="protein sequence ID" value="CAP52847.1"/>
    <property type="molecule type" value="Genomic_DNA"/>
</dbReference>
<dbReference type="SMR" id="B0RUA5"/>
<dbReference type="KEGG" id="xca:xcc-b100_3482"/>
<dbReference type="HOGENOM" id="CLU_036856_0_1_6"/>
<dbReference type="Proteomes" id="UP000001188">
    <property type="component" value="Chromosome"/>
</dbReference>
<dbReference type="GO" id="GO:0005737">
    <property type="term" value="C:cytoplasm"/>
    <property type="evidence" value="ECO:0007669"/>
    <property type="project" value="UniProtKB-SubCell"/>
</dbReference>
<dbReference type="GO" id="GO:0016149">
    <property type="term" value="F:translation release factor activity, codon specific"/>
    <property type="evidence" value="ECO:0007669"/>
    <property type="project" value="UniProtKB-UniRule"/>
</dbReference>
<dbReference type="FunFam" id="3.30.160.20:FF:000004">
    <property type="entry name" value="Peptide chain release factor 1"/>
    <property type="match status" value="1"/>
</dbReference>
<dbReference type="FunFam" id="3.30.70.1660:FF:000002">
    <property type="entry name" value="Peptide chain release factor 1"/>
    <property type="match status" value="1"/>
</dbReference>
<dbReference type="FunFam" id="3.30.70.1660:FF:000004">
    <property type="entry name" value="Peptide chain release factor 1"/>
    <property type="match status" value="1"/>
</dbReference>
<dbReference type="Gene3D" id="3.30.160.20">
    <property type="match status" value="1"/>
</dbReference>
<dbReference type="Gene3D" id="3.30.70.1660">
    <property type="match status" value="2"/>
</dbReference>
<dbReference type="Gene3D" id="6.10.140.1950">
    <property type="match status" value="1"/>
</dbReference>
<dbReference type="HAMAP" id="MF_00093">
    <property type="entry name" value="Rel_fac_1"/>
    <property type="match status" value="1"/>
</dbReference>
<dbReference type="InterPro" id="IPR005139">
    <property type="entry name" value="PCRF"/>
</dbReference>
<dbReference type="InterPro" id="IPR000352">
    <property type="entry name" value="Pep_chain_release_fac_I"/>
</dbReference>
<dbReference type="InterPro" id="IPR045853">
    <property type="entry name" value="Pep_chain_release_fac_I_sf"/>
</dbReference>
<dbReference type="InterPro" id="IPR050057">
    <property type="entry name" value="Prokaryotic/Mito_RF"/>
</dbReference>
<dbReference type="InterPro" id="IPR004373">
    <property type="entry name" value="RF-1"/>
</dbReference>
<dbReference type="NCBIfam" id="TIGR00019">
    <property type="entry name" value="prfA"/>
    <property type="match status" value="1"/>
</dbReference>
<dbReference type="NCBIfam" id="NF001859">
    <property type="entry name" value="PRK00591.1"/>
    <property type="match status" value="1"/>
</dbReference>
<dbReference type="PANTHER" id="PTHR43804">
    <property type="entry name" value="LD18447P"/>
    <property type="match status" value="1"/>
</dbReference>
<dbReference type="PANTHER" id="PTHR43804:SF7">
    <property type="entry name" value="LD18447P"/>
    <property type="match status" value="1"/>
</dbReference>
<dbReference type="Pfam" id="PF03462">
    <property type="entry name" value="PCRF"/>
    <property type="match status" value="1"/>
</dbReference>
<dbReference type="Pfam" id="PF00472">
    <property type="entry name" value="RF-1"/>
    <property type="match status" value="1"/>
</dbReference>
<dbReference type="SMART" id="SM00937">
    <property type="entry name" value="PCRF"/>
    <property type="match status" value="1"/>
</dbReference>
<dbReference type="SUPFAM" id="SSF75620">
    <property type="entry name" value="Release factor"/>
    <property type="match status" value="1"/>
</dbReference>
<dbReference type="PROSITE" id="PS00745">
    <property type="entry name" value="RF_PROK_I"/>
    <property type="match status" value="1"/>
</dbReference>
<gene>
    <name evidence="1" type="primary">prfA</name>
    <name type="ordered locus">xcc-b100_3482</name>
</gene>
<organism>
    <name type="scientific">Xanthomonas campestris pv. campestris (strain B100)</name>
    <dbReference type="NCBI Taxonomy" id="509169"/>
    <lineage>
        <taxon>Bacteria</taxon>
        <taxon>Pseudomonadati</taxon>
        <taxon>Pseudomonadota</taxon>
        <taxon>Gammaproteobacteria</taxon>
        <taxon>Lysobacterales</taxon>
        <taxon>Lysobacteraceae</taxon>
        <taxon>Xanthomonas</taxon>
    </lineage>
</organism>
<evidence type="ECO:0000255" key="1">
    <source>
        <dbReference type="HAMAP-Rule" id="MF_00093"/>
    </source>
</evidence>
<reference key="1">
    <citation type="journal article" date="2008" name="J. Biotechnol.">
        <title>The genome of Xanthomonas campestris pv. campestris B100 and its use for the reconstruction of metabolic pathways involved in xanthan biosynthesis.</title>
        <authorList>
            <person name="Vorhoelter F.-J."/>
            <person name="Schneiker S."/>
            <person name="Goesmann A."/>
            <person name="Krause L."/>
            <person name="Bekel T."/>
            <person name="Kaiser O."/>
            <person name="Linke B."/>
            <person name="Patschkowski T."/>
            <person name="Rueckert C."/>
            <person name="Schmid J."/>
            <person name="Sidhu V.K."/>
            <person name="Sieber V."/>
            <person name="Tauch A."/>
            <person name="Watt S.A."/>
            <person name="Weisshaar B."/>
            <person name="Becker A."/>
            <person name="Niehaus K."/>
            <person name="Puehler A."/>
        </authorList>
    </citation>
    <scope>NUCLEOTIDE SEQUENCE [LARGE SCALE GENOMIC DNA]</scope>
    <source>
        <strain>B100</strain>
    </source>
</reference>
<name>RF1_XANCB</name>
<proteinExistence type="inferred from homology"/>
<comment type="function">
    <text evidence="1">Peptide chain release factor 1 directs the termination of translation in response to the peptide chain termination codons UAG and UAA.</text>
</comment>
<comment type="subcellular location">
    <subcellularLocation>
        <location evidence="1">Cytoplasm</location>
    </subcellularLocation>
</comment>
<comment type="PTM">
    <text evidence="1">Methylated by PrmC. Methylation increases the termination efficiency of RF1.</text>
</comment>
<comment type="similarity">
    <text evidence="1">Belongs to the prokaryotic/mitochondrial release factor family.</text>
</comment>
<accession>B0RUA5</accession>
<feature type="chain" id="PRO_1000093524" description="Peptide chain release factor 1">
    <location>
        <begin position="1"/>
        <end position="361"/>
    </location>
</feature>
<feature type="modified residue" description="N5-methylglutamine" evidence="1">
    <location>
        <position position="235"/>
    </location>
</feature>
<sequence>MTPTLRRKLEALAERREELQHLLSDPEVVSNNDKFRSLSRELSQLEPVALAMQEEARAKADLSAAEAMRNDPEMRELAEEEILAAQARLDELDAQLALLLVPRDPRDEGNLFLEVRAGTGGDEAAIFAGDLFRMYARYAERQGWKVEIESDSPGEHGGYKEVVARVVGRGAYSRLKFESGTHRVQRVPATESQGRIHTSAATVAIIPEADDVEEIVINPADLKVDTFRSSGAGGQHVNKTESAIRITHVPSGVVVECQTERSQHANRDKAMKRLKAQLVEAERSKAAAAEAQTRKLQVGSGDRSQRIRTYSFPQGRITDHRVEGLTLYDLPNIIEGDLDALIARLLHEHQADELARLSEGT</sequence>
<protein>
    <recommendedName>
        <fullName evidence="1">Peptide chain release factor 1</fullName>
        <shortName evidence="1">RF-1</shortName>
    </recommendedName>
</protein>